<comment type="function">
    <text evidence="1">Binds directly to 23S ribosomal RNA and is necessary for the in vitro assembly process of the 50S ribosomal subunit. It is not involved in the protein synthesizing functions of that subunit.</text>
</comment>
<comment type="similarity">
    <text evidence="1">Belongs to the bacterial ribosomal protein bL20 family.</text>
</comment>
<reference key="1">
    <citation type="journal article" date="2007" name="Appl. Environ. Microbiol.">
        <title>Genome sequence of the cellulolytic gliding bacterium Cytophaga hutchinsonii.</title>
        <authorList>
            <person name="Xie G."/>
            <person name="Bruce D.C."/>
            <person name="Challacombe J.F."/>
            <person name="Chertkov O."/>
            <person name="Detter J.C."/>
            <person name="Gilna P."/>
            <person name="Han C.S."/>
            <person name="Lucas S."/>
            <person name="Misra M."/>
            <person name="Myers G.L."/>
            <person name="Richardson P."/>
            <person name="Tapia R."/>
            <person name="Thayer N."/>
            <person name="Thompson L.S."/>
            <person name="Brettin T.S."/>
            <person name="Henrissat B."/>
            <person name="Wilson D.B."/>
            <person name="McBride M.J."/>
        </authorList>
    </citation>
    <scope>NUCLEOTIDE SEQUENCE [LARGE SCALE GENOMIC DNA]</scope>
    <source>
        <strain>ATCC 33406 / DSM 1761 / JCM 20678 / CIP 103989 / IAM 12607 / NBRC 15051 / NCIMB 9469 / D465</strain>
    </source>
</reference>
<evidence type="ECO:0000255" key="1">
    <source>
        <dbReference type="HAMAP-Rule" id="MF_00382"/>
    </source>
</evidence>
<evidence type="ECO:0000305" key="2"/>
<accession>Q11UK0</accession>
<protein>
    <recommendedName>
        <fullName evidence="1">Large ribosomal subunit protein bL20</fullName>
    </recommendedName>
    <alternativeName>
        <fullName evidence="2">50S ribosomal protein L20</fullName>
    </alternativeName>
</protein>
<sequence>MPRSVPSVASRERRKKILKLAKGYFGRRKNVWTVAKNAVERGKVFAYIGRKQKKRHFRGLWIQRINAGTRQHGLSYSQFIGALDKANIKLNRKVLADLAMNDPEAFKAVVEKVKK</sequence>
<name>RL20_CYTH3</name>
<dbReference type="EMBL" id="CP000383">
    <property type="protein sequence ID" value="ABG58914.1"/>
    <property type="molecule type" value="Genomic_DNA"/>
</dbReference>
<dbReference type="RefSeq" id="WP_011585031.1">
    <property type="nucleotide sequence ID" value="NC_008255.1"/>
</dbReference>
<dbReference type="SMR" id="Q11UK0"/>
<dbReference type="STRING" id="269798.CHU_1645"/>
<dbReference type="KEGG" id="chu:CHU_1645"/>
<dbReference type="eggNOG" id="COG0292">
    <property type="taxonomic scope" value="Bacteria"/>
</dbReference>
<dbReference type="HOGENOM" id="CLU_123265_0_1_10"/>
<dbReference type="OrthoDB" id="9808966at2"/>
<dbReference type="Proteomes" id="UP000001822">
    <property type="component" value="Chromosome"/>
</dbReference>
<dbReference type="GO" id="GO:1990904">
    <property type="term" value="C:ribonucleoprotein complex"/>
    <property type="evidence" value="ECO:0007669"/>
    <property type="project" value="UniProtKB-KW"/>
</dbReference>
<dbReference type="GO" id="GO:0005840">
    <property type="term" value="C:ribosome"/>
    <property type="evidence" value="ECO:0007669"/>
    <property type="project" value="UniProtKB-KW"/>
</dbReference>
<dbReference type="GO" id="GO:0019843">
    <property type="term" value="F:rRNA binding"/>
    <property type="evidence" value="ECO:0007669"/>
    <property type="project" value="UniProtKB-UniRule"/>
</dbReference>
<dbReference type="GO" id="GO:0003735">
    <property type="term" value="F:structural constituent of ribosome"/>
    <property type="evidence" value="ECO:0007669"/>
    <property type="project" value="InterPro"/>
</dbReference>
<dbReference type="GO" id="GO:0000027">
    <property type="term" value="P:ribosomal large subunit assembly"/>
    <property type="evidence" value="ECO:0007669"/>
    <property type="project" value="UniProtKB-UniRule"/>
</dbReference>
<dbReference type="GO" id="GO:0006412">
    <property type="term" value="P:translation"/>
    <property type="evidence" value="ECO:0007669"/>
    <property type="project" value="InterPro"/>
</dbReference>
<dbReference type="CDD" id="cd07026">
    <property type="entry name" value="Ribosomal_L20"/>
    <property type="match status" value="1"/>
</dbReference>
<dbReference type="FunFam" id="1.10.1900.20:FF:000001">
    <property type="entry name" value="50S ribosomal protein L20"/>
    <property type="match status" value="1"/>
</dbReference>
<dbReference type="Gene3D" id="6.10.160.10">
    <property type="match status" value="1"/>
</dbReference>
<dbReference type="Gene3D" id="1.10.1900.20">
    <property type="entry name" value="Ribosomal protein L20"/>
    <property type="match status" value="1"/>
</dbReference>
<dbReference type="HAMAP" id="MF_00382">
    <property type="entry name" value="Ribosomal_bL20"/>
    <property type="match status" value="1"/>
</dbReference>
<dbReference type="InterPro" id="IPR005813">
    <property type="entry name" value="Ribosomal_bL20"/>
</dbReference>
<dbReference type="InterPro" id="IPR049946">
    <property type="entry name" value="RIBOSOMAL_L20_CS"/>
</dbReference>
<dbReference type="InterPro" id="IPR035566">
    <property type="entry name" value="Ribosomal_protein_bL20_C"/>
</dbReference>
<dbReference type="NCBIfam" id="TIGR01032">
    <property type="entry name" value="rplT_bact"/>
    <property type="match status" value="1"/>
</dbReference>
<dbReference type="PANTHER" id="PTHR10986">
    <property type="entry name" value="39S RIBOSOMAL PROTEIN L20"/>
    <property type="match status" value="1"/>
</dbReference>
<dbReference type="Pfam" id="PF00453">
    <property type="entry name" value="Ribosomal_L20"/>
    <property type="match status" value="1"/>
</dbReference>
<dbReference type="PRINTS" id="PR00062">
    <property type="entry name" value="RIBOSOMALL20"/>
</dbReference>
<dbReference type="SUPFAM" id="SSF74731">
    <property type="entry name" value="Ribosomal protein L20"/>
    <property type="match status" value="1"/>
</dbReference>
<dbReference type="PROSITE" id="PS00937">
    <property type="entry name" value="RIBOSOMAL_L20"/>
    <property type="match status" value="1"/>
</dbReference>
<feature type="chain" id="PRO_1000048966" description="Large ribosomal subunit protein bL20">
    <location>
        <begin position="1"/>
        <end position="115"/>
    </location>
</feature>
<organism>
    <name type="scientific">Cytophaga hutchinsonii (strain ATCC 33406 / DSM 1761 / CIP 103989 / NBRC 15051 / NCIMB 9469 / D465)</name>
    <dbReference type="NCBI Taxonomy" id="269798"/>
    <lineage>
        <taxon>Bacteria</taxon>
        <taxon>Pseudomonadati</taxon>
        <taxon>Bacteroidota</taxon>
        <taxon>Cytophagia</taxon>
        <taxon>Cytophagales</taxon>
        <taxon>Cytophagaceae</taxon>
        <taxon>Cytophaga</taxon>
    </lineage>
</organism>
<proteinExistence type="inferred from homology"/>
<keyword id="KW-1185">Reference proteome</keyword>
<keyword id="KW-0687">Ribonucleoprotein</keyword>
<keyword id="KW-0689">Ribosomal protein</keyword>
<keyword id="KW-0694">RNA-binding</keyword>
<keyword id="KW-0699">rRNA-binding</keyword>
<gene>
    <name evidence="1" type="primary">rplT</name>
    <name type="ordered locus">CHU_1645</name>
</gene>